<comment type="function">
    <text evidence="1 2 8">Subunit OSCP, of the mitochondrial membrane ATP synthase complex (F(1)F(0) ATP synthase or Complex V) that produces ATP from ADP in the presence of a proton gradient across the membrane which is generated by electron transport complexes of the respiratory chain. ATP synthase complex consist of a soluble F(1) head domain - the catalytic core - and a membrane F(1) domain - the membrane proton channel. These two domains are linked by a central stalk rotating inside the F(1) region and a stationary peripheral stalk. During catalysis, ATP synthesis in the catalytic domain of F(1) is coupled via a rotary mechanism of the central stalk subunits to proton translocation (By similarity). In vivo, can only synthesize ATP although its ATP hydrolase activity can be activated artificially in vitro (By similarity). Part of the complex F(0) domain (By similarity). Part of the complex F(0) domain and the peripheric stalk, which acts as a stator to hold the catalytic alpha(3)beta(3) subcomplex and subunit a/ATP6 static relative to the rotary elements (Probable).</text>
</comment>
<comment type="subunit">
    <text evidence="2 4 6">Component of the ATP synthase complex composed at least of ATP5F1A/subunit alpha, ATP5F1B/subunit beta, ATP5MC1/subunit c (homooctomer), MT-ATP6/subunit a, MT-ATP8/subunit 8, ATP5ME/subunit e, ATP5MF/subunit f, ATP5MG/subunit g, ATP5MK/subunit k, ATP5MJ/subunit j, ATP5F1C/subunit gamma, ATP5F1D/subunit delta, ATP5F1E/subunit epsilon, ATP5PF/subunit F6, ATP5PB/subunit b, ATP5PD/subunit d, ATP5PO/subunit OSCP (PubMed:17570365, PubMed:25851905). ATP synthase complex consists of a soluble F(1) head domain (subunits alpha(3) and beta(3)) - the catalytic core - and a membrane F(0) domain - the membrane proton channel (subunits c, a, 8, e, f, g, k and j). These two domains are linked by a central stalk (subunits gamma, delta, and epsilon) rotating inside the F1 region and a stationary peripheral stalk (subunits F6, b, d, and OSCP) (By similarity).</text>
</comment>
<comment type="subcellular location">
    <subcellularLocation>
        <location>Mitochondrion</location>
    </subcellularLocation>
    <subcellularLocation>
        <location>Mitochondrion inner membrane</location>
    </subcellularLocation>
</comment>
<comment type="PTM">
    <text evidence="2">Acetylation at Lys-162 decreases ATP production. Deacetylated by SIRT3 (By similarity).</text>
</comment>
<comment type="PTM">
    <text evidence="2">In response to mitochondrial stress, the precursor protein is ubiquitinated by the SIFI complex in the cytoplasm before mitochondrial import, leading to its degradation. Within the SIFI complex, UBR4 initiates ubiquitin chain that are further elongated or branched by KCMF1.</text>
</comment>
<comment type="similarity">
    <text evidence="7">Belongs to the ATPase delta chain family.</text>
</comment>
<evidence type="ECO:0000250" key="1">
    <source>
        <dbReference type="UniProtKB" id="P19483"/>
    </source>
</evidence>
<evidence type="ECO:0000250" key="2">
    <source>
        <dbReference type="UniProtKB" id="P48047"/>
    </source>
</evidence>
<evidence type="ECO:0000250" key="3">
    <source>
        <dbReference type="UniProtKB" id="Q9DB20"/>
    </source>
</evidence>
<evidence type="ECO:0000269" key="4">
    <source>
    </source>
</evidence>
<evidence type="ECO:0000269" key="5">
    <source>
    </source>
</evidence>
<evidence type="ECO:0000269" key="6">
    <source>
    </source>
</evidence>
<evidence type="ECO:0000305" key="7"/>
<evidence type="ECO:0000305" key="8">
    <source>
    </source>
</evidence>
<evidence type="ECO:0007829" key="9">
    <source>
        <dbReference type="PDB" id="2JMX"/>
    </source>
</evidence>
<evidence type="ECO:0007829" key="10">
    <source>
        <dbReference type="PDB" id="6YY0"/>
    </source>
</evidence>
<feature type="transit peptide" description="Mitochondrion" evidence="5">
    <location>
        <begin position="1"/>
        <end position="23"/>
    </location>
</feature>
<feature type="chain" id="PRO_0000002645" description="ATP synthase peripheral stalk subunit OSCP, mitochondrial">
    <location>
        <begin position="24"/>
        <end position="213"/>
    </location>
</feature>
<feature type="short sequence motif" description="SIFI-degron" evidence="2">
    <location>
        <begin position="5"/>
        <end position="23"/>
    </location>
</feature>
<feature type="modified residue" description="N6-acetyllysine" evidence="3">
    <location>
        <position position="54"/>
    </location>
</feature>
<feature type="modified residue" description="N6-acetyllysine" evidence="3">
    <location>
        <position position="60"/>
    </location>
</feature>
<feature type="modified residue" description="N6-acetyllysine" evidence="3">
    <location>
        <position position="70"/>
    </location>
</feature>
<feature type="modified residue" description="N6-acetyllysine" evidence="3">
    <location>
        <position position="73"/>
    </location>
</feature>
<feature type="modified residue" description="N6-succinyllysine" evidence="3">
    <location>
        <position position="90"/>
    </location>
</feature>
<feature type="modified residue" description="N6-acetyllysine; alternate" evidence="3">
    <location>
        <position position="100"/>
    </location>
</feature>
<feature type="modified residue" description="N6-succinyllysine; alternate" evidence="3">
    <location>
        <position position="100"/>
    </location>
</feature>
<feature type="modified residue" description="N6-acetyllysine; alternate" evidence="3">
    <location>
        <position position="158"/>
    </location>
</feature>
<feature type="modified residue" description="N6-succinyllysine; alternate" evidence="3">
    <location>
        <position position="158"/>
    </location>
</feature>
<feature type="modified residue" description="N6-acetyllysine; alternate" evidence="2">
    <location>
        <position position="162"/>
    </location>
</feature>
<feature type="modified residue" description="N6-succinyllysine; alternate" evidence="3">
    <location>
        <position position="162"/>
    </location>
</feature>
<feature type="modified residue" description="N6-acetyllysine" evidence="2">
    <location>
        <position position="172"/>
    </location>
</feature>
<feature type="modified residue" description="N6-acetyllysine" evidence="3">
    <location>
        <position position="176"/>
    </location>
</feature>
<feature type="modified residue" description="N6-acetyllysine" evidence="2">
    <location>
        <position position="192"/>
    </location>
</feature>
<feature type="modified residue" description="N6-succinyllysine" evidence="3">
    <location>
        <position position="199"/>
    </location>
</feature>
<feature type="sequence conflict" description="In Ref. 1; AAA30676." evidence="7" ref="1">
    <original>A</original>
    <variation>T</variation>
    <location>
        <position position="152"/>
    </location>
</feature>
<feature type="helix" evidence="10">
    <location>
        <begin position="37"/>
        <end position="50"/>
    </location>
</feature>
<feature type="turn" evidence="10">
    <location>
        <begin position="51"/>
        <end position="53"/>
    </location>
</feature>
<feature type="helix" evidence="10">
    <location>
        <begin position="55"/>
        <end position="68"/>
    </location>
</feature>
<feature type="helix" evidence="10">
    <location>
        <begin position="72"/>
        <end position="78"/>
    </location>
</feature>
<feature type="strand" evidence="9">
    <location>
        <begin position="81"/>
        <end position="83"/>
    </location>
</feature>
<feature type="helix" evidence="10">
    <location>
        <begin position="85"/>
        <end position="99"/>
    </location>
</feature>
<feature type="helix" evidence="10">
    <location>
        <begin position="103"/>
        <end position="114"/>
    </location>
</feature>
<feature type="helix" evidence="10">
    <location>
        <begin position="117"/>
        <end position="120"/>
    </location>
</feature>
<feature type="helix" evidence="10">
    <location>
        <begin position="121"/>
        <end position="135"/>
    </location>
</feature>
<feature type="strand" evidence="10">
    <location>
        <begin position="138"/>
        <end position="147"/>
    </location>
</feature>
<feature type="helix" evidence="10">
    <location>
        <begin position="151"/>
        <end position="164"/>
    </location>
</feature>
<feature type="strand" evidence="10">
    <location>
        <begin position="170"/>
        <end position="172"/>
    </location>
</feature>
<feature type="strand" evidence="10">
    <location>
        <begin position="175"/>
        <end position="177"/>
    </location>
</feature>
<feature type="strand" evidence="10">
    <location>
        <begin position="179"/>
        <end position="181"/>
    </location>
</feature>
<feature type="strand" evidence="10">
    <location>
        <begin position="183"/>
        <end position="189"/>
    </location>
</feature>
<feature type="strand" evidence="10">
    <location>
        <begin position="192"/>
        <end position="196"/>
    </location>
</feature>
<feature type="helix" evidence="10">
    <location>
        <begin position="198"/>
        <end position="210"/>
    </location>
</feature>
<gene>
    <name evidence="2" type="primary">ATP5PO</name>
    <name type="synonym">ATP5O</name>
</gene>
<dbReference type="EMBL" id="M18753">
    <property type="protein sequence ID" value="AAA30676.1"/>
    <property type="molecule type" value="mRNA"/>
</dbReference>
<dbReference type="EMBL" id="BC102204">
    <property type="protein sequence ID" value="AAI02205.1"/>
    <property type="molecule type" value="mRNA"/>
</dbReference>
<dbReference type="PIR" id="A27382">
    <property type="entry name" value="A27382"/>
</dbReference>
<dbReference type="RefSeq" id="NP_776669.1">
    <property type="nucleotide sequence ID" value="NM_174244.1"/>
</dbReference>
<dbReference type="PDB" id="2BO5">
    <property type="method" value="NMR"/>
    <property type="chains" value="A=24-143"/>
</dbReference>
<dbReference type="PDB" id="2JMX">
    <property type="method" value="NMR"/>
    <property type="chains" value="A=24-143"/>
</dbReference>
<dbReference type="PDB" id="2WSS">
    <property type="method" value="X-ray"/>
    <property type="resolution" value="3.20 A"/>
    <property type="chains" value="S/W=24-213"/>
</dbReference>
<dbReference type="PDB" id="4B2Q">
    <property type="method" value="EM"/>
    <property type="resolution" value="37.00 A"/>
    <property type="chains" value="W/w=24-143"/>
</dbReference>
<dbReference type="PDB" id="5ARA">
    <property type="method" value="EM"/>
    <property type="resolution" value="6.70 A"/>
    <property type="chains" value="S=24-213"/>
</dbReference>
<dbReference type="PDB" id="5ARE">
    <property type="method" value="EM"/>
    <property type="resolution" value="7.40 A"/>
    <property type="chains" value="S=24-213"/>
</dbReference>
<dbReference type="PDB" id="5ARH">
    <property type="method" value="EM"/>
    <property type="resolution" value="7.20 A"/>
    <property type="chains" value="S=24-213"/>
</dbReference>
<dbReference type="PDB" id="5ARI">
    <property type="method" value="EM"/>
    <property type="resolution" value="7.40 A"/>
    <property type="chains" value="S=24-213"/>
</dbReference>
<dbReference type="PDB" id="5FIJ">
    <property type="method" value="EM"/>
    <property type="resolution" value="7.40 A"/>
    <property type="chains" value="S=24-213"/>
</dbReference>
<dbReference type="PDB" id="5FIK">
    <property type="method" value="EM"/>
    <property type="resolution" value="6.40 A"/>
    <property type="chains" value="S=24-213"/>
</dbReference>
<dbReference type="PDB" id="5FIL">
    <property type="method" value="EM"/>
    <property type="resolution" value="7.10 A"/>
    <property type="chains" value="S=24-213"/>
</dbReference>
<dbReference type="PDB" id="6YY0">
    <property type="method" value="EM"/>
    <property type="resolution" value="3.23 A"/>
    <property type="chains" value="S=24-213"/>
</dbReference>
<dbReference type="PDB" id="6Z1R">
    <property type="method" value="EM"/>
    <property type="resolution" value="3.29 A"/>
    <property type="chains" value="S=24-213"/>
</dbReference>
<dbReference type="PDB" id="6Z1U">
    <property type="method" value="EM"/>
    <property type="resolution" value="3.47 A"/>
    <property type="chains" value="S=24-213"/>
</dbReference>
<dbReference type="PDB" id="6ZIQ">
    <property type="method" value="EM"/>
    <property type="resolution" value="4.33 A"/>
    <property type="chains" value="S=24-213"/>
</dbReference>
<dbReference type="PDB" id="6ZIT">
    <property type="method" value="EM"/>
    <property type="resolution" value="3.49 A"/>
    <property type="chains" value="S=24-213"/>
</dbReference>
<dbReference type="PDB" id="6ZIU">
    <property type="method" value="EM"/>
    <property type="resolution" value="6.02 A"/>
    <property type="chains" value="S=24-213"/>
</dbReference>
<dbReference type="PDB" id="6ZPO">
    <property type="method" value="EM"/>
    <property type="resolution" value="4.00 A"/>
    <property type="chains" value="S=24-213"/>
</dbReference>
<dbReference type="PDB" id="6ZQM">
    <property type="method" value="EM"/>
    <property type="resolution" value="3.29 A"/>
    <property type="chains" value="S=24-213"/>
</dbReference>
<dbReference type="PDB" id="6ZQN">
    <property type="method" value="EM"/>
    <property type="resolution" value="4.00 A"/>
    <property type="chains" value="S=24-213"/>
</dbReference>
<dbReference type="PDB" id="7AJB">
    <property type="method" value="EM"/>
    <property type="resolution" value="9.20 A"/>
    <property type="chains" value="AS/S=24-213"/>
</dbReference>
<dbReference type="PDB" id="7AJC">
    <property type="method" value="EM"/>
    <property type="resolution" value="11.90 A"/>
    <property type="chains" value="AS/S=24-213"/>
</dbReference>
<dbReference type="PDB" id="7AJD">
    <property type="method" value="EM"/>
    <property type="resolution" value="9.00 A"/>
    <property type="chains" value="AS/S=24-213"/>
</dbReference>
<dbReference type="PDB" id="7AJE">
    <property type="method" value="EM"/>
    <property type="resolution" value="9.40 A"/>
    <property type="chains" value="AS/S=24-213"/>
</dbReference>
<dbReference type="PDB" id="7AJF">
    <property type="method" value="EM"/>
    <property type="resolution" value="8.45 A"/>
    <property type="chains" value="AS/S=24-213"/>
</dbReference>
<dbReference type="PDB" id="7AJG">
    <property type="method" value="EM"/>
    <property type="resolution" value="10.70 A"/>
    <property type="chains" value="AS/S=24-213"/>
</dbReference>
<dbReference type="PDB" id="7AJH">
    <property type="method" value="EM"/>
    <property type="resolution" value="9.70 A"/>
    <property type="chains" value="AS/S=24-213"/>
</dbReference>
<dbReference type="PDB" id="7AJI">
    <property type="method" value="EM"/>
    <property type="resolution" value="11.40 A"/>
    <property type="chains" value="AS/S=24-213"/>
</dbReference>
<dbReference type="PDB" id="7AJJ">
    <property type="method" value="EM"/>
    <property type="resolution" value="13.10 A"/>
    <property type="chains" value="AS/S=24-213"/>
</dbReference>
<dbReference type="PDBsum" id="2BO5"/>
<dbReference type="PDBsum" id="2JMX"/>
<dbReference type="PDBsum" id="2WSS"/>
<dbReference type="PDBsum" id="4B2Q"/>
<dbReference type="PDBsum" id="5ARA"/>
<dbReference type="PDBsum" id="5ARE"/>
<dbReference type="PDBsum" id="5ARH"/>
<dbReference type="PDBsum" id="5ARI"/>
<dbReference type="PDBsum" id="5FIJ"/>
<dbReference type="PDBsum" id="5FIK"/>
<dbReference type="PDBsum" id="5FIL"/>
<dbReference type="PDBsum" id="6YY0"/>
<dbReference type="PDBsum" id="6Z1R"/>
<dbReference type="PDBsum" id="6Z1U"/>
<dbReference type="PDBsum" id="6ZIQ"/>
<dbReference type="PDBsum" id="6ZIT"/>
<dbReference type="PDBsum" id="6ZIU"/>
<dbReference type="PDBsum" id="6ZPO"/>
<dbReference type="PDBsum" id="6ZQM"/>
<dbReference type="PDBsum" id="6ZQN"/>
<dbReference type="PDBsum" id="7AJB"/>
<dbReference type="PDBsum" id="7AJC"/>
<dbReference type="PDBsum" id="7AJD"/>
<dbReference type="PDBsum" id="7AJE"/>
<dbReference type="PDBsum" id="7AJF"/>
<dbReference type="PDBsum" id="7AJG"/>
<dbReference type="PDBsum" id="7AJH"/>
<dbReference type="PDBsum" id="7AJI"/>
<dbReference type="PDBsum" id="7AJJ"/>
<dbReference type="BMRB" id="P13621"/>
<dbReference type="EMDB" id="EMD-11001"/>
<dbReference type="EMDB" id="EMD-11228"/>
<dbReference type="EMDB" id="EMD-11229"/>
<dbReference type="EMDB" id="EMD-11230"/>
<dbReference type="EMDB" id="EMD-11428"/>
<dbReference type="EMDB" id="EMD-11429"/>
<dbReference type="EMDB" id="EMD-11430"/>
<dbReference type="SMR" id="P13621"/>
<dbReference type="CORUM" id="P13621"/>
<dbReference type="DIP" id="DIP-39019N"/>
<dbReference type="FunCoup" id="P13621">
    <property type="interactions" value="2455"/>
</dbReference>
<dbReference type="IntAct" id="P13621">
    <property type="interactions" value="2"/>
</dbReference>
<dbReference type="MINT" id="P13621"/>
<dbReference type="STRING" id="9913.ENSBTAP00000024326"/>
<dbReference type="Allergome" id="1548">
    <property type="allergen name" value="Bos d OSCP"/>
</dbReference>
<dbReference type="GlyGen" id="P13621">
    <property type="glycosylation" value="1 site, 1 O-linked glycan (1 site)"/>
</dbReference>
<dbReference type="PaxDb" id="9913-ENSBTAP00000024326"/>
<dbReference type="PeptideAtlas" id="P13621"/>
<dbReference type="Ensembl" id="ENSBTAT00000024326.4">
    <property type="protein sequence ID" value="ENSBTAP00000024326.2"/>
    <property type="gene ID" value="ENSBTAG00000018278.7"/>
</dbReference>
<dbReference type="GeneID" id="281640"/>
<dbReference type="KEGG" id="bta:281640"/>
<dbReference type="CTD" id="539"/>
<dbReference type="VEuPathDB" id="HostDB:ENSBTAG00000018278"/>
<dbReference type="VGNC" id="VGNC:103017">
    <property type="gene designation" value="ATP5PO"/>
</dbReference>
<dbReference type="eggNOG" id="KOG1662">
    <property type="taxonomic scope" value="Eukaryota"/>
</dbReference>
<dbReference type="GeneTree" id="ENSGT00390000015060"/>
<dbReference type="HOGENOM" id="CLU_085114_0_0_1"/>
<dbReference type="InParanoid" id="P13621"/>
<dbReference type="OMA" id="MVDNIQD"/>
<dbReference type="OrthoDB" id="1262810at2759"/>
<dbReference type="TreeFam" id="TF106241"/>
<dbReference type="Reactome" id="R-BTA-163210">
    <property type="pathway name" value="Formation of ATP by chemiosmotic coupling"/>
</dbReference>
<dbReference type="Reactome" id="R-BTA-8949613">
    <property type="pathway name" value="Cristae formation"/>
</dbReference>
<dbReference type="Reactome" id="R-BTA-9837999">
    <property type="pathway name" value="Mitochondrial protein degradation"/>
</dbReference>
<dbReference type="EvolutionaryTrace" id="P13621"/>
<dbReference type="Proteomes" id="UP000009136">
    <property type="component" value="Chromosome 1"/>
</dbReference>
<dbReference type="Bgee" id="ENSBTAG00000018278">
    <property type="expression patterns" value="Expressed in cardiac ventricle and 105 other cell types or tissues"/>
</dbReference>
<dbReference type="GO" id="GO:0005743">
    <property type="term" value="C:mitochondrial inner membrane"/>
    <property type="evidence" value="ECO:0007669"/>
    <property type="project" value="UniProtKB-SubCell"/>
</dbReference>
<dbReference type="GO" id="GO:0005739">
    <property type="term" value="C:mitochondrion"/>
    <property type="evidence" value="ECO:0000305"/>
    <property type="project" value="UniProtKB"/>
</dbReference>
<dbReference type="GO" id="GO:0045259">
    <property type="term" value="C:proton-transporting ATP synthase complex"/>
    <property type="evidence" value="ECO:0000314"/>
    <property type="project" value="UniProtKB"/>
</dbReference>
<dbReference type="GO" id="GO:0046933">
    <property type="term" value="F:proton-transporting ATP synthase activity, rotational mechanism"/>
    <property type="evidence" value="ECO:0007669"/>
    <property type="project" value="InterPro"/>
</dbReference>
<dbReference type="GO" id="GO:0042776">
    <property type="term" value="P:proton motive force-driven mitochondrial ATP synthesis"/>
    <property type="evidence" value="ECO:0000318"/>
    <property type="project" value="GO_Central"/>
</dbReference>
<dbReference type="FunFam" id="1.10.520.20:FF:000002">
    <property type="entry name" value="ATP synthase subunit O, mitochondrial"/>
    <property type="match status" value="1"/>
</dbReference>
<dbReference type="Gene3D" id="1.10.520.20">
    <property type="entry name" value="N-terminal domain of the delta subunit of the F1F0-ATP synthase"/>
    <property type="match status" value="1"/>
</dbReference>
<dbReference type="HAMAP" id="MF_01416">
    <property type="entry name" value="ATP_synth_delta_bact"/>
    <property type="match status" value="1"/>
</dbReference>
<dbReference type="InterPro" id="IPR026015">
    <property type="entry name" value="ATP_synth_OSCP/delta_N_sf"/>
</dbReference>
<dbReference type="InterPro" id="IPR020781">
    <property type="entry name" value="ATPase_OSCP/d_CS"/>
</dbReference>
<dbReference type="InterPro" id="IPR000711">
    <property type="entry name" value="ATPase_OSCP/dsu"/>
</dbReference>
<dbReference type="NCBIfam" id="TIGR01145">
    <property type="entry name" value="ATP_synt_delta"/>
    <property type="match status" value="1"/>
</dbReference>
<dbReference type="PANTHER" id="PTHR11910">
    <property type="entry name" value="ATP SYNTHASE DELTA CHAIN"/>
    <property type="match status" value="1"/>
</dbReference>
<dbReference type="Pfam" id="PF00213">
    <property type="entry name" value="OSCP"/>
    <property type="match status" value="1"/>
</dbReference>
<dbReference type="PRINTS" id="PR00125">
    <property type="entry name" value="ATPASEDELTA"/>
</dbReference>
<dbReference type="SUPFAM" id="SSF47928">
    <property type="entry name" value="N-terminal domain of the delta subunit of the F1F0-ATP synthase"/>
    <property type="match status" value="1"/>
</dbReference>
<dbReference type="PROSITE" id="PS00389">
    <property type="entry name" value="ATPASE_DELTA"/>
    <property type="match status" value="1"/>
</dbReference>
<proteinExistence type="evidence at protein level"/>
<accession>P13621</accession>
<accession>Q3T0Y7</accession>
<keyword id="KW-0002">3D-structure</keyword>
<keyword id="KW-0007">Acetylation</keyword>
<keyword id="KW-0066">ATP synthesis</keyword>
<keyword id="KW-0903">Direct protein sequencing</keyword>
<keyword id="KW-0375">Hydrogen ion transport</keyword>
<keyword id="KW-0406">Ion transport</keyword>
<keyword id="KW-0472">Membrane</keyword>
<keyword id="KW-0496">Mitochondrion</keyword>
<keyword id="KW-0999">Mitochondrion inner membrane</keyword>
<keyword id="KW-1185">Reference proteome</keyword>
<keyword id="KW-0809">Transit peptide</keyword>
<keyword id="KW-0813">Transport</keyword>
<keyword id="KW-0832">Ubl conjugation</keyword>
<sequence length="213" mass="23320">MAALAVSGLSQQVRCFSTSVVRPFAKLVRPPVQIYGIEGRYATALYSAASKQNKLEQVEKELLRVGQILKEPKMAASLLNPYVKRSVKVKSLSDMTAKEKFSPLTSNLINLLAENGRLTNTPAVISAFSTMMSVHRGEVPCTVTTASALDEATLTELKTVLKSFLSKGQVLKLEVKIDPSIMGGMIVRIGEKYVDMSAKTKIQKLSRAMREIL</sequence>
<organism>
    <name type="scientific">Bos taurus</name>
    <name type="common">Bovine</name>
    <dbReference type="NCBI Taxonomy" id="9913"/>
    <lineage>
        <taxon>Eukaryota</taxon>
        <taxon>Metazoa</taxon>
        <taxon>Chordata</taxon>
        <taxon>Craniata</taxon>
        <taxon>Vertebrata</taxon>
        <taxon>Euteleostomi</taxon>
        <taxon>Mammalia</taxon>
        <taxon>Eutheria</taxon>
        <taxon>Laurasiatheria</taxon>
        <taxon>Artiodactyla</taxon>
        <taxon>Ruminantia</taxon>
        <taxon>Pecora</taxon>
        <taxon>Bovidae</taxon>
        <taxon>Bovinae</taxon>
        <taxon>Bos</taxon>
    </lineage>
</organism>
<reference key="1">
    <citation type="journal article" date="1987" name="Biochemistry">
        <title>ATP synthase from bovine mitochondria: sequences of imported precursors of oligomycin sensitivity conferral protein, factor 6, and adenosinetriphosphatase inhibitor protein.</title>
        <authorList>
            <person name="Walker J.E."/>
            <person name="Gay N.J."/>
            <person name="Powell S.J."/>
            <person name="Kostina M."/>
            <person name="Dyer M.R."/>
        </authorList>
    </citation>
    <scope>NUCLEOTIDE SEQUENCE [MRNA]</scope>
</reference>
<reference key="2">
    <citation type="submission" date="2005-08" db="EMBL/GenBank/DDBJ databases">
        <authorList>
            <consortium name="NIH - Mammalian Gene Collection (MGC) project"/>
        </authorList>
    </citation>
    <scope>NUCLEOTIDE SEQUENCE [LARGE SCALE MRNA]</scope>
    <source>
        <strain>Crossbred X Angus</strain>
        <tissue>Ileum</tissue>
    </source>
</reference>
<reference key="3">
    <citation type="journal article" date="1991" name="Biochemistry">
        <title>Identification of the subunits of F1F0-ATPase from bovine heart mitochondria.</title>
        <authorList>
            <person name="Walker J.E."/>
            <person name="Lutter R."/>
            <person name="Dupuis A."/>
            <person name="Runswick M.J."/>
        </authorList>
    </citation>
    <scope>PROTEIN SEQUENCE OF 24-28</scope>
    <source>
        <tissue>Heart</tissue>
    </source>
</reference>
<reference key="4">
    <citation type="journal article" date="2007" name="FEBS Lett.">
        <title>Association of two proteolipids of unknown function with ATP synthase from bovine heart mitochondria.</title>
        <authorList>
            <person name="Chen R."/>
            <person name="Runswick M.J."/>
            <person name="Carroll J."/>
            <person name="Fearnley I.M."/>
            <person name="Walker J.E."/>
        </authorList>
    </citation>
    <scope>IDENTIFICATION IN THE ATP SYNTHASE COMPLEX</scope>
</reference>
<reference key="5">
    <citation type="journal article" date="2015" name="J. Biol. Chem.">
        <title>Organization of Subunits in the Membrane Domain of the Bovine F-ATPase Revealed by Covalent Cross-linking.</title>
        <authorList>
            <person name="Lee J."/>
            <person name="Ding S."/>
            <person name="Walpole T.B."/>
            <person name="Holding A.N."/>
            <person name="Montgomery M.G."/>
            <person name="Fearnley I.M."/>
            <person name="Walker J.E."/>
        </authorList>
    </citation>
    <scope>IDENTIFICATION BY MASS SPECTROMETRY</scope>
    <scope>IDENTIFICATION IN THE ATP SYNTHASE COMPLEX</scope>
</reference>
<protein>
    <recommendedName>
        <fullName evidence="2">ATP synthase peripheral stalk subunit OSCP, mitochondrial</fullName>
    </recommendedName>
    <alternativeName>
        <fullName evidence="7">ATP synthase subunit O</fullName>
    </alternativeName>
    <alternativeName>
        <fullName>Oligomycin sensitivity conferral protein</fullName>
        <shortName>OSCP</shortName>
    </alternativeName>
</protein>
<name>ATPO_BOVIN</name>